<evidence type="ECO:0000255" key="1">
    <source>
        <dbReference type="HAMAP-Rule" id="MF_00011"/>
    </source>
</evidence>
<protein>
    <recommendedName>
        <fullName evidence="1">Adenylosuccinate synthetase</fullName>
        <shortName evidence="1">AMPSase</shortName>
        <shortName evidence="1">AdSS</shortName>
        <ecNumber evidence="1">6.3.4.4</ecNumber>
    </recommendedName>
    <alternativeName>
        <fullName evidence="1">IMP--aspartate ligase</fullName>
    </alternativeName>
</protein>
<name>PURA_MARN8</name>
<reference key="1">
    <citation type="journal article" date="2011" name="Appl. Environ. Microbiol.">
        <title>Genomic potential of Marinobacter aquaeolei, a biogeochemical 'opportunitroph'.</title>
        <authorList>
            <person name="Singer E."/>
            <person name="Webb E.A."/>
            <person name="Nelson W.C."/>
            <person name="Heidelberg J.F."/>
            <person name="Ivanova N."/>
            <person name="Pati A."/>
            <person name="Edwards K.J."/>
        </authorList>
    </citation>
    <scope>NUCLEOTIDE SEQUENCE [LARGE SCALE GENOMIC DNA]</scope>
    <source>
        <strain>ATCC 700491 / DSM 11845 / VT8</strain>
    </source>
</reference>
<feature type="chain" id="PRO_1000000853" description="Adenylosuccinate synthetase">
    <location>
        <begin position="1"/>
        <end position="431"/>
    </location>
</feature>
<feature type="active site" description="Proton acceptor" evidence="1">
    <location>
        <position position="14"/>
    </location>
</feature>
<feature type="active site" description="Proton donor" evidence="1">
    <location>
        <position position="42"/>
    </location>
</feature>
<feature type="binding site" evidence="1">
    <location>
        <begin position="13"/>
        <end position="19"/>
    </location>
    <ligand>
        <name>GTP</name>
        <dbReference type="ChEBI" id="CHEBI:37565"/>
    </ligand>
</feature>
<feature type="binding site" description="in other chain" evidence="1">
    <location>
        <begin position="14"/>
        <end position="17"/>
    </location>
    <ligand>
        <name>IMP</name>
        <dbReference type="ChEBI" id="CHEBI:58053"/>
        <note>ligand shared between dimeric partners</note>
    </ligand>
</feature>
<feature type="binding site" evidence="1">
    <location>
        <position position="14"/>
    </location>
    <ligand>
        <name>Mg(2+)</name>
        <dbReference type="ChEBI" id="CHEBI:18420"/>
    </ligand>
</feature>
<feature type="binding site" description="in other chain" evidence="1">
    <location>
        <begin position="39"/>
        <end position="42"/>
    </location>
    <ligand>
        <name>IMP</name>
        <dbReference type="ChEBI" id="CHEBI:58053"/>
        <note>ligand shared between dimeric partners</note>
    </ligand>
</feature>
<feature type="binding site" evidence="1">
    <location>
        <begin position="41"/>
        <end position="43"/>
    </location>
    <ligand>
        <name>GTP</name>
        <dbReference type="ChEBI" id="CHEBI:37565"/>
    </ligand>
</feature>
<feature type="binding site" evidence="1">
    <location>
        <position position="41"/>
    </location>
    <ligand>
        <name>Mg(2+)</name>
        <dbReference type="ChEBI" id="CHEBI:18420"/>
    </ligand>
</feature>
<feature type="binding site" description="in other chain" evidence="1">
    <location>
        <position position="130"/>
    </location>
    <ligand>
        <name>IMP</name>
        <dbReference type="ChEBI" id="CHEBI:58053"/>
        <note>ligand shared between dimeric partners</note>
    </ligand>
</feature>
<feature type="binding site" evidence="1">
    <location>
        <position position="144"/>
    </location>
    <ligand>
        <name>IMP</name>
        <dbReference type="ChEBI" id="CHEBI:58053"/>
        <note>ligand shared between dimeric partners</note>
    </ligand>
</feature>
<feature type="binding site" description="in other chain" evidence="1">
    <location>
        <position position="225"/>
    </location>
    <ligand>
        <name>IMP</name>
        <dbReference type="ChEBI" id="CHEBI:58053"/>
        <note>ligand shared between dimeric partners</note>
    </ligand>
</feature>
<feature type="binding site" description="in other chain" evidence="1">
    <location>
        <position position="240"/>
    </location>
    <ligand>
        <name>IMP</name>
        <dbReference type="ChEBI" id="CHEBI:58053"/>
        <note>ligand shared between dimeric partners</note>
    </ligand>
</feature>
<feature type="binding site" evidence="1">
    <location>
        <begin position="300"/>
        <end position="306"/>
    </location>
    <ligand>
        <name>substrate</name>
    </ligand>
</feature>
<feature type="binding site" description="in other chain" evidence="1">
    <location>
        <position position="304"/>
    </location>
    <ligand>
        <name>IMP</name>
        <dbReference type="ChEBI" id="CHEBI:58053"/>
        <note>ligand shared between dimeric partners</note>
    </ligand>
</feature>
<feature type="binding site" evidence="1">
    <location>
        <position position="306"/>
    </location>
    <ligand>
        <name>GTP</name>
        <dbReference type="ChEBI" id="CHEBI:37565"/>
    </ligand>
</feature>
<feature type="binding site" evidence="1">
    <location>
        <begin position="332"/>
        <end position="334"/>
    </location>
    <ligand>
        <name>GTP</name>
        <dbReference type="ChEBI" id="CHEBI:37565"/>
    </ligand>
</feature>
<feature type="binding site" evidence="1">
    <location>
        <begin position="414"/>
        <end position="416"/>
    </location>
    <ligand>
        <name>GTP</name>
        <dbReference type="ChEBI" id="CHEBI:37565"/>
    </ligand>
</feature>
<comment type="function">
    <text evidence="1">Plays an important role in the de novo pathway of purine nucleotide biosynthesis. Catalyzes the first committed step in the biosynthesis of AMP from IMP.</text>
</comment>
<comment type="catalytic activity">
    <reaction evidence="1">
        <text>IMP + L-aspartate + GTP = N(6)-(1,2-dicarboxyethyl)-AMP + GDP + phosphate + 2 H(+)</text>
        <dbReference type="Rhea" id="RHEA:15753"/>
        <dbReference type="ChEBI" id="CHEBI:15378"/>
        <dbReference type="ChEBI" id="CHEBI:29991"/>
        <dbReference type="ChEBI" id="CHEBI:37565"/>
        <dbReference type="ChEBI" id="CHEBI:43474"/>
        <dbReference type="ChEBI" id="CHEBI:57567"/>
        <dbReference type="ChEBI" id="CHEBI:58053"/>
        <dbReference type="ChEBI" id="CHEBI:58189"/>
        <dbReference type="EC" id="6.3.4.4"/>
    </reaction>
</comment>
<comment type="cofactor">
    <cofactor evidence="1">
        <name>Mg(2+)</name>
        <dbReference type="ChEBI" id="CHEBI:18420"/>
    </cofactor>
    <text evidence="1">Binds 1 Mg(2+) ion per subunit.</text>
</comment>
<comment type="pathway">
    <text evidence="1">Purine metabolism; AMP biosynthesis via de novo pathway; AMP from IMP: step 1/2.</text>
</comment>
<comment type="subunit">
    <text evidence="1">Homodimer.</text>
</comment>
<comment type="subcellular location">
    <subcellularLocation>
        <location evidence="1">Cytoplasm</location>
    </subcellularLocation>
</comment>
<comment type="similarity">
    <text evidence="1">Belongs to the adenylosuccinate synthetase family.</text>
</comment>
<organism>
    <name type="scientific">Marinobacter nauticus (strain ATCC 700491 / DSM 11845 / VT8)</name>
    <name type="common">Marinobacter aquaeolei</name>
    <dbReference type="NCBI Taxonomy" id="351348"/>
    <lineage>
        <taxon>Bacteria</taxon>
        <taxon>Pseudomonadati</taxon>
        <taxon>Pseudomonadota</taxon>
        <taxon>Gammaproteobacteria</taxon>
        <taxon>Pseudomonadales</taxon>
        <taxon>Marinobacteraceae</taxon>
        <taxon>Marinobacter</taxon>
    </lineage>
</organism>
<keyword id="KW-0963">Cytoplasm</keyword>
<keyword id="KW-0342">GTP-binding</keyword>
<keyword id="KW-0436">Ligase</keyword>
<keyword id="KW-0460">Magnesium</keyword>
<keyword id="KW-0479">Metal-binding</keyword>
<keyword id="KW-0547">Nucleotide-binding</keyword>
<keyword id="KW-0658">Purine biosynthesis</keyword>
<dbReference type="EC" id="6.3.4.4" evidence="1"/>
<dbReference type="EMBL" id="CP000514">
    <property type="protein sequence ID" value="ABM19839.1"/>
    <property type="molecule type" value="Genomic_DNA"/>
</dbReference>
<dbReference type="RefSeq" id="WP_011786209.1">
    <property type="nucleotide sequence ID" value="NC_008740.1"/>
</dbReference>
<dbReference type="SMR" id="A1U4C0"/>
<dbReference type="STRING" id="351348.Maqu_2764"/>
<dbReference type="KEGG" id="maq:Maqu_2764"/>
<dbReference type="eggNOG" id="COG0104">
    <property type="taxonomic scope" value="Bacteria"/>
</dbReference>
<dbReference type="HOGENOM" id="CLU_029848_0_0_6"/>
<dbReference type="OrthoDB" id="9807553at2"/>
<dbReference type="UniPathway" id="UPA00075">
    <property type="reaction ID" value="UER00335"/>
</dbReference>
<dbReference type="Proteomes" id="UP000000998">
    <property type="component" value="Chromosome"/>
</dbReference>
<dbReference type="GO" id="GO:0005737">
    <property type="term" value="C:cytoplasm"/>
    <property type="evidence" value="ECO:0007669"/>
    <property type="project" value="UniProtKB-SubCell"/>
</dbReference>
<dbReference type="GO" id="GO:0004019">
    <property type="term" value="F:adenylosuccinate synthase activity"/>
    <property type="evidence" value="ECO:0007669"/>
    <property type="project" value="UniProtKB-UniRule"/>
</dbReference>
<dbReference type="GO" id="GO:0005525">
    <property type="term" value="F:GTP binding"/>
    <property type="evidence" value="ECO:0007669"/>
    <property type="project" value="UniProtKB-UniRule"/>
</dbReference>
<dbReference type="GO" id="GO:0000287">
    <property type="term" value="F:magnesium ion binding"/>
    <property type="evidence" value="ECO:0007669"/>
    <property type="project" value="UniProtKB-UniRule"/>
</dbReference>
<dbReference type="GO" id="GO:0044208">
    <property type="term" value="P:'de novo' AMP biosynthetic process"/>
    <property type="evidence" value="ECO:0007669"/>
    <property type="project" value="UniProtKB-UniRule"/>
</dbReference>
<dbReference type="GO" id="GO:0046040">
    <property type="term" value="P:IMP metabolic process"/>
    <property type="evidence" value="ECO:0007669"/>
    <property type="project" value="TreeGrafter"/>
</dbReference>
<dbReference type="CDD" id="cd03108">
    <property type="entry name" value="AdSS"/>
    <property type="match status" value="1"/>
</dbReference>
<dbReference type="FunFam" id="1.10.300.10:FF:000001">
    <property type="entry name" value="Adenylosuccinate synthetase"/>
    <property type="match status" value="1"/>
</dbReference>
<dbReference type="FunFam" id="3.90.170.10:FF:000001">
    <property type="entry name" value="Adenylosuccinate synthetase"/>
    <property type="match status" value="1"/>
</dbReference>
<dbReference type="Gene3D" id="3.40.440.10">
    <property type="entry name" value="Adenylosuccinate Synthetase, subunit A, domain 1"/>
    <property type="match status" value="1"/>
</dbReference>
<dbReference type="Gene3D" id="1.10.300.10">
    <property type="entry name" value="Adenylosuccinate Synthetase, subunit A, domain 2"/>
    <property type="match status" value="1"/>
</dbReference>
<dbReference type="Gene3D" id="3.90.170.10">
    <property type="entry name" value="Adenylosuccinate Synthetase, subunit A, domain 3"/>
    <property type="match status" value="1"/>
</dbReference>
<dbReference type="HAMAP" id="MF_00011">
    <property type="entry name" value="Adenylosucc_synth"/>
    <property type="match status" value="1"/>
</dbReference>
<dbReference type="InterPro" id="IPR018220">
    <property type="entry name" value="Adenylosuccin_syn_GTP-bd"/>
</dbReference>
<dbReference type="InterPro" id="IPR033128">
    <property type="entry name" value="Adenylosuccin_syn_Lys_AS"/>
</dbReference>
<dbReference type="InterPro" id="IPR042109">
    <property type="entry name" value="Adenylosuccinate_synth_dom1"/>
</dbReference>
<dbReference type="InterPro" id="IPR042110">
    <property type="entry name" value="Adenylosuccinate_synth_dom2"/>
</dbReference>
<dbReference type="InterPro" id="IPR042111">
    <property type="entry name" value="Adenylosuccinate_synth_dom3"/>
</dbReference>
<dbReference type="InterPro" id="IPR001114">
    <property type="entry name" value="Adenylosuccinate_synthetase"/>
</dbReference>
<dbReference type="InterPro" id="IPR027417">
    <property type="entry name" value="P-loop_NTPase"/>
</dbReference>
<dbReference type="NCBIfam" id="NF002223">
    <property type="entry name" value="PRK01117.1"/>
    <property type="match status" value="1"/>
</dbReference>
<dbReference type="NCBIfam" id="TIGR00184">
    <property type="entry name" value="purA"/>
    <property type="match status" value="1"/>
</dbReference>
<dbReference type="PANTHER" id="PTHR11846">
    <property type="entry name" value="ADENYLOSUCCINATE SYNTHETASE"/>
    <property type="match status" value="1"/>
</dbReference>
<dbReference type="PANTHER" id="PTHR11846:SF0">
    <property type="entry name" value="ADENYLOSUCCINATE SYNTHETASE"/>
    <property type="match status" value="1"/>
</dbReference>
<dbReference type="Pfam" id="PF00709">
    <property type="entry name" value="Adenylsucc_synt"/>
    <property type="match status" value="1"/>
</dbReference>
<dbReference type="SMART" id="SM00788">
    <property type="entry name" value="Adenylsucc_synt"/>
    <property type="match status" value="1"/>
</dbReference>
<dbReference type="SUPFAM" id="SSF52540">
    <property type="entry name" value="P-loop containing nucleoside triphosphate hydrolases"/>
    <property type="match status" value="1"/>
</dbReference>
<dbReference type="PROSITE" id="PS01266">
    <property type="entry name" value="ADENYLOSUCCIN_SYN_1"/>
    <property type="match status" value="1"/>
</dbReference>
<dbReference type="PROSITE" id="PS00513">
    <property type="entry name" value="ADENYLOSUCCIN_SYN_2"/>
    <property type="match status" value="1"/>
</dbReference>
<proteinExistence type="inferred from homology"/>
<sequence>MGKNVVVLGTQWGDEGKGKIVDLLTDKVAAVVRFQGGHNAGHTLVIEGKKTALHLIPSGILRQDVQCLIGNGVVLSPEALLKEVRELEANGVAVRDRLKISLACPIILRTHVRIDQARERARGNDKIGTTGRGIGPAYEDKVSRRGVRLGDLCNPADFEIKLREIMSYHNFVLTEYFKEEAEDIDAALEELRQMGEEILPMAADVTDILHDYRKRGEHILFEGAQGSLLDIDLGTYPYVTSSNTTAGGTATGSGFGPLYLDYVLGITKAYTTRVGSGPFPTELFDDMGKHLAVKGNEVGTTTGRSRRCGWFDAVALRHAIQINSVSGICLTKLDVLDGLETVKVCIGYKTPNGEITRPPIGCDSYSDIEPVYEELPGWSESTVGLTSVDQLPENAKAYIRFLEEQIEAPIDIISTGPDRVETITLRHPFGE</sequence>
<accession>A1U4C0</accession>
<gene>
    <name evidence="1" type="primary">purA</name>
    <name type="ordered locus">Maqu_2764</name>
</gene>